<proteinExistence type="inferred from homology"/>
<sequence>MTTVNLAAYRFVSLDSIEQWRPLVAARCNTLGLRGTILLAPEGINLFIAGPREATDAFVDYIRHDPLFEGKFADLPFKESLSDSQPFRRMLVRLKREIITMKKPAIKPELGRAPSVDARTLKAWLDQGHDDAGRPVVMLDTRNAFEVDVGTFDRALDYRIDKFSEFPAVIEANRADLEGKTIVSFCTGGIRCEKAAIHMKDVGIENVYQLEGGILKYFEEVGGAHYHGDCFVFDYRTALNPQLAPTADVTCFACRAVVPADAQQSPLYVPGKCCPACHPGDSGTPGRRAEPGAEPARAV</sequence>
<accession>A3N7C4</accession>
<feature type="chain" id="PRO_1000013732" description="tRNA uridine(34) hydroxylase">
    <location>
        <begin position="1"/>
        <end position="299"/>
    </location>
</feature>
<feature type="domain" description="Rhodanese" evidence="1">
    <location>
        <begin position="132"/>
        <end position="226"/>
    </location>
</feature>
<feature type="active site" description="Cysteine persulfide intermediate" evidence="1">
    <location>
        <position position="186"/>
    </location>
</feature>
<dbReference type="EC" id="1.14.-.-" evidence="1"/>
<dbReference type="EMBL" id="CP000570">
    <property type="protein sequence ID" value="ABN84690.1"/>
    <property type="molecule type" value="Genomic_DNA"/>
</dbReference>
<dbReference type="RefSeq" id="WP_004185449.1">
    <property type="nucleotide sequence ID" value="NC_009074.1"/>
</dbReference>
<dbReference type="SMR" id="A3N7C4"/>
<dbReference type="KEGG" id="bpd:BURPS668_1196"/>
<dbReference type="HOGENOM" id="CLU_038878_0_1_4"/>
<dbReference type="GO" id="GO:0016705">
    <property type="term" value="F:oxidoreductase activity, acting on paired donors, with incorporation or reduction of molecular oxygen"/>
    <property type="evidence" value="ECO:0007669"/>
    <property type="project" value="UniProtKB-UniRule"/>
</dbReference>
<dbReference type="GO" id="GO:0006400">
    <property type="term" value="P:tRNA modification"/>
    <property type="evidence" value="ECO:0007669"/>
    <property type="project" value="UniProtKB-UniRule"/>
</dbReference>
<dbReference type="CDD" id="cd01518">
    <property type="entry name" value="RHOD_YceA"/>
    <property type="match status" value="1"/>
</dbReference>
<dbReference type="Gene3D" id="3.30.70.100">
    <property type="match status" value="1"/>
</dbReference>
<dbReference type="Gene3D" id="3.40.250.10">
    <property type="entry name" value="Rhodanese-like domain"/>
    <property type="match status" value="1"/>
</dbReference>
<dbReference type="HAMAP" id="MF_00469">
    <property type="entry name" value="TrhO"/>
    <property type="match status" value="1"/>
</dbReference>
<dbReference type="InterPro" id="IPR001763">
    <property type="entry name" value="Rhodanese-like_dom"/>
</dbReference>
<dbReference type="InterPro" id="IPR036873">
    <property type="entry name" value="Rhodanese-like_dom_sf"/>
</dbReference>
<dbReference type="InterPro" id="IPR020936">
    <property type="entry name" value="TrhO"/>
</dbReference>
<dbReference type="InterPro" id="IPR040503">
    <property type="entry name" value="TRHO_N"/>
</dbReference>
<dbReference type="NCBIfam" id="NF003703">
    <property type="entry name" value="PRK05320.1"/>
    <property type="match status" value="1"/>
</dbReference>
<dbReference type="PANTHER" id="PTHR43268:SF3">
    <property type="entry name" value="RHODANESE-LIKE DOMAIN-CONTAINING PROTEIN 7-RELATED"/>
    <property type="match status" value="1"/>
</dbReference>
<dbReference type="PANTHER" id="PTHR43268">
    <property type="entry name" value="THIOSULFATE SULFURTRANSFERASE/RHODANESE-LIKE DOMAIN-CONTAINING PROTEIN 2"/>
    <property type="match status" value="1"/>
</dbReference>
<dbReference type="Pfam" id="PF00581">
    <property type="entry name" value="Rhodanese"/>
    <property type="match status" value="1"/>
</dbReference>
<dbReference type="Pfam" id="PF17773">
    <property type="entry name" value="UPF0176_N"/>
    <property type="match status" value="1"/>
</dbReference>
<dbReference type="SMART" id="SM00450">
    <property type="entry name" value="RHOD"/>
    <property type="match status" value="1"/>
</dbReference>
<dbReference type="SUPFAM" id="SSF52821">
    <property type="entry name" value="Rhodanese/Cell cycle control phosphatase"/>
    <property type="match status" value="1"/>
</dbReference>
<dbReference type="PROSITE" id="PS50206">
    <property type="entry name" value="RHODANESE_3"/>
    <property type="match status" value="1"/>
</dbReference>
<keyword id="KW-0560">Oxidoreductase</keyword>
<keyword id="KW-0819">tRNA processing</keyword>
<protein>
    <recommendedName>
        <fullName evidence="1">tRNA uridine(34) hydroxylase</fullName>
        <ecNumber evidence="1">1.14.-.-</ecNumber>
    </recommendedName>
    <alternativeName>
        <fullName evidence="1">tRNA hydroxylation protein O</fullName>
    </alternativeName>
</protein>
<gene>
    <name evidence="1" type="primary">trhO</name>
    <name type="ordered locus">BURPS668_1196</name>
</gene>
<comment type="function">
    <text evidence="1">Catalyzes oxygen-dependent 5-hydroxyuridine (ho5U) modification at position 34 in tRNAs.</text>
</comment>
<comment type="catalytic activity">
    <reaction evidence="1">
        <text>uridine(34) in tRNA + AH2 + O2 = 5-hydroxyuridine(34) in tRNA + A + H2O</text>
        <dbReference type="Rhea" id="RHEA:64224"/>
        <dbReference type="Rhea" id="RHEA-COMP:11727"/>
        <dbReference type="Rhea" id="RHEA-COMP:13381"/>
        <dbReference type="ChEBI" id="CHEBI:13193"/>
        <dbReference type="ChEBI" id="CHEBI:15377"/>
        <dbReference type="ChEBI" id="CHEBI:15379"/>
        <dbReference type="ChEBI" id="CHEBI:17499"/>
        <dbReference type="ChEBI" id="CHEBI:65315"/>
        <dbReference type="ChEBI" id="CHEBI:136877"/>
    </reaction>
</comment>
<comment type="similarity">
    <text evidence="1">Belongs to the TrhO family.</text>
</comment>
<organism>
    <name type="scientific">Burkholderia pseudomallei (strain 668)</name>
    <dbReference type="NCBI Taxonomy" id="320373"/>
    <lineage>
        <taxon>Bacteria</taxon>
        <taxon>Pseudomonadati</taxon>
        <taxon>Pseudomonadota</taxon>
        <taxon>Betaproteobacteria</taxon>
        <taxon>Burkholderiales</taxon>
        <taxon>Burkholderiaceae</taxon>
        <taxon>Burkholderia</taxon>
        <taxon>pseudomallei group</taxon>
    </lineage>
</organism>
<name>TRHO_BURP6</name>
<evidence type="ECO:0000255" key="1">
    <source>
        <dbReference type="HAMAP-Rule" id="MF_00469"/>
    </source>
</evidence>
<reference key="1">
    <citation type="journal article" date="2010" name="Genome Biol. Evol.">
        <title>Continuing evolution of Burkholderia mallei through genome reduction and large-scale rearrangements.</title>
        <authorList>
            <person name="Losada L."/>
            <person name="Ronning C.M."/>
            <person name="DeShazer D."/>
            <person name="Woods D."/>
            <person name="Fedorova N."/>
            <person name="Kim H.S."/>
            <person name="Shabalina S.A."/>
            <person name="Pearson T.R."/>
            <person name="Brinkac L."/>
            <person name="Tan P."/>
            <person name="Nandi T."/>
            <person name="Crabtree J."/>
            <person name="Badger J."/>
            <person name="Beckstrom-Sternberg S."/>
            <person name="Saqib M."/>
            <person name="Schutzer S.E."/>
            <person name="Keim P."/>
            <person name="Nierman W.C."/>
        </authorList>
    </citation>
    <scope>NUCLEOTIDE SEQUENCE [LARGE SCALE GENOMIC DNA]</scope>
    <source>
        <strain>668</strain>
    </source>
</reference>